<gene>
    <name evidence="1" type="primary">arnF</name>
    <name type="ordered locus">Z3517</name>
    <name type="ordered locus">ECs3146</name>
</gene>
<feature type="chain" id="PRO_0000218154" description="Probable 4-amino-4-deoxy-L-arabinose-phosphoundecaprenol flippase subunit ArnF">
    <location>
        <begin position="1"/>
        <end position="128"/>
    </location>
</feature>
<feature type="topological domain" description="Cytoplasmic" evidence="1">
    <location>
        <begin position="1"/>
        <end position="2"/>
    </location>
</feature>
<feature type="transmembrane region" description="Helical" evidence="1">
    <location>
        <begin position="3"/>
        <end position="23"/>
    </location>
</feature>
<feature type="topological domain" description="Periplasmic" evidence="1">
    <location>
        <begin position="24"/>
        <end position="35"/>
    </location>
</feature>
<feature type="transmembrane region" description="Helical" evidence="1">
    <location>
        <begin position="36"/>
        <end position="56"/>
    </location>
</feature>
<feature type="topological domain" description="Cytoplasmic" evidence="1">
    <location>
        <begin position="57"/>
        <end position="76"/>
    </location>
</feature>
<feature type="transmembrane region" description="Helical" evidence="1">
    <location>
        <begin position="77"/>
        <end position="97"/>
    </location>
</feature>
<feature type="topological domain" description="Periplasmic" evidence="1">
    <location>
        <begin position="98"/>
        <end position="100"/>
    </location>
</feature>
<feature type="transmembrane region" description="Helical" evidence="1">
    <location>
        <begin position="101"/>
        <end position="121"/>
    </location>
</feature>
<feature type="topological domain" description="Cytoplasmic" evidence="1">
    <location>
        <begin position="122"/>
        <end position="128"/>
    </location>
</feature>
<accession>Q8XDY7</accession>
<reference key="1">
    <citation type="journal article" date="2001" name="Nature">
        <title>Genome sequence of enterohaemorrhagic Escherichia coli O157:H7.</title>
        <authorList>
            <person name="Perna N.T."/>
            <person name="Plunkett G. III"/>
            <person name="Burland V."/>
            <person name="Mau B."/>
            <person name="Glasner J.D."/>
            <person name="Rose D.J."/>
            <person name="Mayhew G.F."/>
            <person name="Evans P.S."/>
            <person name="Gregor J."/>
            <person name="Kirkpatrick H.A."/>
            <person name="Posfai G."/>
            <person name="Hackett J."/>
            <person name="Klink S."/>
            <person name="Boutin A."/>
            <person name="Shao Y."/>
            <person name="Miller L."/>
            <person name="Grotbeck E.J."/>
            <person name="Davis N.W."/>
            <person name="Lim A."/>
            <person name="Dimalanta E.T."/>
            <person name="Potamousis K."/>
            <person name="Apodaca J."/>
            <person name="Anantharaman T.S."/>
            <person name="Lin J."/>
            <person name="Yen G."/>
            <person name="Schwartz D.C."/>
            <person name="Welch R.A."/>
            <person name="Blattner F.R."/>
        </authorList>
    </citation>
    <scope>NUCLEOTIDE SEQUENCE [LARGE SCALE GENOMIC DNA]</scope>
    <source>
        <strain>O157:H7 / EDL933 / ATCC 700927 / EHEC</strain>
    </source>
</reference>
<reference key="2">
    <citation type="journal article" date="2001" name="DNA Res.">
        <title>Complete genome sequence of enterohemorrhagic Escherichia coli O157:H7 and genomic comparison with a laboratory strain K-12.</title>
        <authorList>
            <person name="Hayashi T."/>
            <person name="Makino K."/>
            <person name="Ohnishi M."/>
            <person name="Kurokawa K."/>
            <person name="Ishii K."/>
            <person name="Yokoyama K."/>
            <person name="Han C.-G."/>
            <person name="Ohtsubo E."/>
            <person name="Nakayama K."/>
            <person name="Murata T."/>
            <person name="Tanaka M."/>
            <person name="Tobe T."/>
            <person name="Iida T."/>
            <person name="Takami H."/>
            <person name="Honda T."/>
            <person name="Sasakawa C."/>
            <person name="Ogasawara N."/>
            <person name="Yasunaga T."/>
            <person name="Kuhara S."/>
            <person name="Shiba T."/>
            <person name="Hattori M."/>
            <person name="Shinagawa H."/>
        </authorList>
    </citation>
    <scope>NUCLEOTIDE SEQUENCE [LARGE SCALE GENOMIC DNA]</scope>
    <source>
        <strain>O157:H7 / Sakai / RIMD 0509952 / EHEC</strain>
    </source>
</reference>
<evidence type="ECO:0000255" key="1">
    <source>
        <dbReference type="HAMAP-Rule" id="MF_00538"/>
    </source>
</evidence>
<evidence type="ECO:0000305" key="2"/>
<proteinExistence type="inferred from homology"/>
<keyword id="KW-0997">Cell inner membrane</keyword>
<keyword id="KW-1003">Cell membrane</keyword>
<keyword id="KW-0441">Lipid A biosynthesis</keyword>
<keyword id="KW-0444">Lipid biosynthesis</keyword>
<keyword id="KW-0443">Lipid metabolism</keyword>
<keyword id="KW-0448">Lipopolysaccharide biosynthesis</keyword>
<keyword id="KW-0472">Membrane</keyword>
<keyword id="KW-1185">Reference proteome</keyword>
<keyword id="KW-0812">Transmembrane</keyword>
<keyword id="KW-1133">Transmembrane helix</keyword>
<keyword id="KW-0813">Transport</keyword>
<comment type="function">
    <text evidence="1">Translocates 4-amino-4-deoxy-L-arabinose-phosphoundecaprenol (alpha-L-Ara4N-phosphoundecaprenol) from the cytoplasmic to the periplasmic side of the inner membrane.</text>
</comment>
<comment type="pathway">
    <text evidence="1">Bacterial outer membrane biogenesis; lipopolysaccharide biosynthesis.</text>
</comment>
<comment type="subunit">
    <text evidence="1">Heterodimer of ArnE and ArnF.</text>
</comment>
<comment type="subcellular location">
    <subcellularLocation>
        <location evidence="1">Cell inner membrane</location>
        <topology evidence="1">Multi-pass membrane protein</topology>
    </subcellularLocation>
</comment>
<comment type="similarity">
    <text evidence="1">Belongs to the ArnF family.</text>
</comment>
<comment type="sequence caution" evidence="2">
    <conflict type="erroneous initiation">
        <sequence resource="EMBL-CDS" id="AAG57390"/>
    </conflict>
</comment>
<comment type="sequence caution" evidence="2">
    <conflict type="erroneous initiation">
        <sequence resource="EMBL-CDS" id="BAB36569"/>
    </conflict>
</comment>
<name>ARNF_ECO57</name>
<dbReference type="EMBL" id="AE005174">
    <property type="protein sequence ID" value="AAG57390.1"/>
    <property type="status" value="ALT_INIT"/>
    <property type="molecule type" value="Genomic_DNA"/>
</dbReference>
<dbReference type="EMBL" id="BA000007">
    <property type="protein sequence ID" value="BAB36569.1"/>
    <property type="status" value="ALT_INIT"/>
    <property type="molecule type" value="Genomic_DNA"/>
</dbReference>
<dbReference type="PIR" id="B85866">
    <property type="entry name" value="B85866"/>
</dbReference>
<dbReference type="PIR" id="B91022">
    <property type="entry name" value="B91022"/>
</dbReference>
<dbReference type="RefSeq" id="NP_311173.2">
    <property type="nucleotide sequence ID" value="NC_002695.1"/>
</dbReference>
<dbReference type="RefSeq" id="WP_000523005.1">
    <property type="nucleotide sequence ID" value="NZ_VOAI01000001.1"/>
</dbReference>
<dbReference type="STRING" id="155864.Z3517"/>
<dbReference type="GeneID" id="75205691"/>
<dbReference type="GeneID" id="916854"/>
<dbReference type="KEGG" id="ece:Z3517"/>
<dbReference type="KEGG" id="ecs:ECs_3146"/>
<dbReference type="PATRIC" id="fig|386585.9.peg.3283"/>
<dbReference type="eggNOG" id="COG2076">
    <property type="taxonomic scope" value="Bacteria"/>
</dbReference>
<dbReference type="HOGENOM" id="CLU_1243704_0_0_6"/>
<dbReference type="OMA" id="NEPMSLR"/>
<dbReference type="UniPathway" id="UPA00030"/>
<dbReference type="Proteomes" id="UP000000558">
    <property type="component" value="Chromosome"/>
</dbReference>
<dbReference type="Proteomes" id="UP000002519">
    <property type="component" value="Chromosome"/>
</dbReference>
<dbReference type="GO" id="GO:0005886">
    <property type="term" value="C:plasma membrane"/>
    <property type="evidence" value="ECO:0007669"/>
    <property type="project" value="UniProtKB-SubCell"/>
</dbReference>
<dbReference type="GO" id="GO:1901505">
    <property type="term" value="F:carbohydrate derivative transmembrane transporter activity"/>
    <property type="evidence" value="ECO:0007669"/>
    <property type="project" value="InterPro"/>
</dbReference>
<dbReference type="GO" id="GO:0009245">
    <property type="term" value="P:lipid A biosynthetic process"/>
    <property type="evidence" value="ECO:0007669"/>
    <property type="project" value="UniProtKB-UniRule"/>
</dbReference>
<dbReference type="GO" id="GO:0009103">
    <property type="term" value="P:lipopolysaccharide biosynthetic process"/>
    <property type="evidence" value="ECO:0007669"/>
    <property type="project" value="UniProtKB-UniRule"/>
</dbReference>
<dbReference type="FunFam" id="1.10.3730.20:FF:000003">
    <property type="entry name" value="Probable 4-amino-4-deoxy-L-arabinose-phosphoundecaprenol flippase subunit ArnF"/>
    <property type="match status" value="1"/>
</dbReference>
<dbReference type="Gene3D" id="1.10.3730.20">
    <property type="match status" value="1"/>
</dbReference>
<dbReference type="HAMAP" id="MF_00538">
    <property type="entry name" value="Flippase_ArnF"/>
    <property type="match status" value="1"/>
</dbReference>
<dbReference type="InterPro" id="IPR022832">
    <property type="entry name" value="Flippase_ArnF"/>
</dbReference>
<dbReference type="InterPro" id="IPR000390">
    <property type="entry name" value="Small_drug/metabolite_transptr"/>
</dbReference>
<dbReference type="NCBIfam" id="NF002816">
    <property type="entry name" value="PRK02971.1-2"/>
    <property type="match status" value="1"/>
</dbReference>
<dbReference type="PANTHER" id="PTHR30561:SF9">
    <property type="entry name" value="4-AMINO-4-DEOXY-L-ARABINOSE-PHOSPHOUNDECAPRENOL FLIPPASE SUBUNIT ARNF-RELATED"/>
    <property type="match status" value="1"/>
</dbReference>
<dbReference type="PANTHER" id="PTHR30561">
    <property type="entry name" value="SMR FAMILY PROTON-DEPENDENT DRUG EFFLUX TRANSPORTER SUGE"/>
    <property type="match status" value="1"/>
</dbReference>
<dbReference type="SUPFAM" id="SSF103481">
    <property type="entry name" value="Multidrug resistance efflux transporter EmrE"/>
    <property type="match status" value="1"/>
</dbReference>
<organism>
    <name type="scientific">Escherichia coli O157:H7</name>
    <dbReference type="NCBI Taxonomy" id="83334"/>
    <lineage>
        <taxon>Bacteria</taxon>
        <taxon>Pseudomonadati</taxon>
        <taxon>Pseudomonadota</taxon>
        <taxon>Gammaproteobacteria</taxon>
        <taxon>Enterobacterales</taxon>
        <taxon>Enterobacteriaceae</taxon>
        <taxon>Escherichia</taxon>
    </lineage>
</organism>
<sequence length="128" mass="14067">MGLIWGLFSVIIASVAQLSLGFAASHLPPMTHLWDFIAALLAFGLDARILLLGLLGYLLSVFCWYKTLHKLALSKAYALLSMSYVLVWIASMVLPGWEGTFSLKALLGVACIMSGLMLIFLPTTKQRY</sequence>
<protein>
    <recommendedName>
        <fullName evidence="1">Probable 4-amino-4-deoxy-L-arabinose-phosphoundecaprenol flippase subunit ArnF</fullName>
        <shortName evidence="1">L-Ara4N-phosphoundecaprenol flippase subunit ArnF</shortName>
    </recommendedName>
    <alternativeName>
        <fullName evidence="1">Undecaprenyl phosphate-aminoarabinose flippase subunit ArnF</fullName>
    </alternativeName>
</protein>